<evidence type="ECO:0000255" key="1">
    <source>
        <dbReference type="HAMAP-Rule" id="MF_00530"/>
    </source>
</evidence>
<reference key="1">
    <citation type="journal article" date="2008" name="J. Bacteriol.">
        <title>Genome sequence of Staphylococcus aureus strain Newman and comparative analysis of staphylococcal genomes: polymorphism and evolution of two major pathogenicity islands.</title>
        <authorList>
            <person name="Baba T."/>
            <person name="Bae T."/>
            <person name="Schneewind O."/>
            <person name="Takeuchi F."/>
            <person name="Hiramatsu K."/>
        </authorList>
    </citation>
    <scope>NUCLEOTIDE SEQUENCE [LARGE SCALE GENOMIC DNA]</scope>
    <source>
        <strain>Newman</strain>
    </source>
</reference>
<organism>
    <name type="scientific">Staphylococcus aureus (strain Newman)</name>
    <dbReference type="NCBI Taxonomy" id="426430"/>
    <lineage>
        <taxon>Bacteria</taxon>
        <taxon>Bacillati</taxon>
        <taxon>Bacillota</taxon>
        <taxon>Bacilli</taxon>
        <taxon>Bacillales</taxon>
        <taxon>Staphylococcaceae</taxon>
        <taxon>Staphylococcus</taxon>
    </lineage>
</organism>
<feature type="chain" id="PRO_1000072503" description="ATP synthase epsilon chain">
    <location>
        <begin position="1"/>
        <end position="134"/>
    </location>
</feature>
<protein>
    <recommendedName>
        <fullName evidence="1">ATP synthase epsilon chain</fullName>
    </recommendedName>
    <alternativeName>
        <fullName evidence="1">ATP synthase F1 sector epsilon subunit</fullName>
    </alternativeName>
    <alternativeName>
        <fullName evidence="1">F-ATPase epsilon subunit</fullName>
    </alternativeName>
</protein>
<name>ATPE_STAAE</name>
<comment type="function">
    <text evidence="1">Produces ATP from ADP in the presence of a proton gradient across the membrane.</text>
</comment>
<comment type="subunit">
    <text evidence="1">F-type ATPases have 2 components, CF(1) - the catalytic core - and CF(0) - the membrane proton channel. CF(1) has five subunits: alpha(3), beta(3), gamma(1), delta(1), epsilon(1). CF(0) has three main subunits: a, b and c.</text>
</comment>
<comment type="subcellular location">
    <subcellularLocation>
        <location evidence="1">Cell membrane</location>
        <topology evidence="1">Peripheral membrane protein</topology>
    </subcellularLocation>
</comment>
<comment type="similarity">
    <text evidence="1">Belongs to the ATPase epsilon chain family.</text>
</comment>
<gene>
    <name evidence="1" type="primary">atpC</name>
    <name type="ordered locus">NWMN_2006</name>
</gene>
<proteinExistence type="inferred from homology"/>
<dbReference type="EMBL" id="AP009351">
    <property type="protein sequence ID" value="BAF68278.1"/>
    <property type="molecule type" value="Genomic_DNA"/>
</dbReference>
<dbReference type="RefSeq" id="WP_001094394.1">
    <property type="nucleotide sequence ID" value="NZ_JBBIAE010000008.1"/>
</dbReference>
<dbReference type="SMR" id="A6QIU6"/>
<dbReference type="KEGG" id="sae:NWMN_2006"/>
<dbReference type="HOGENOM" id="CLU_084338_1_3_9"/>
<dbReference type="Proteomes" id="UP000006386">
    <property type="component" value="Chromosome"/>
</dbReference>
<dbReference type="GO" id="GO:0005886">
    <property type="term" value="C:plasma membrane"/>
    <property type="evidence" value="ECO:0007669"/>
    <property type="project" value="UniProtKB-SubCell"/>
</dbReference>
<dbReference type="GO" id="GO:0045259">
    <property type="term" value="C:proton-transporting ATP synthase complex"/>
    <property type="evidence" value="ECO:0007669"/>
    <property type="project" value="UniProtKB-KW"/>
</dbReference>
<dbReference type="GO" id="GO:0005524">
    <property type="term" value="F:ATP binding"/>
    <property type="evidence" value="ECO:0007669"/>
    <property type="project" value="UniProtKB-UniRule"/>
</dbReference>
<dbReference type="GO" id="GO:0046933">
    <property type="term" value="F:proton-transporting ATP synthase activity, rotational mechanism"/>
    <property type="evidence" value="ECO:0007669"/>
    <property type="project" value="UniProtKB-UniRule"/>
</dbReference>
<dbReference type="CDD" id="cd12152">
    <property type="entry name" value="F1-ATPase_delta"/>
    <property type="match status" value="1"/>
</dbReference>
<dbReference type="FunFam" id="1.20.5.440:FF:000001">
    <property type="entry name" value="ATP synthase epsilon chain"/>
    <property type="match status" value="1"/>
</dbReference>
<dbReference type="FunFam" id="2.60.15.10:FF:000001">
    <property type="entry name" value="ATP synthase epsilon chain"/>
    <property type="match status" value="1"/>
</dbReference>
<dbReference type="Gene3D" id="1.20.5.440">
    <property type="entry name" value="ATP synthase delta/epsilon subunit, C-terminal domain"/>
    <property type="match status" value="1"/>
</dbReference>
<dbReference type="Gene3D" id="2.60.15.10">
    <property type="entry name" value="F0F1 ATP synthase delta/epsilon subunit, N-terminal"/>
    <property type="match status" value="1"/>
</dbReference>
<dbReference type="HAMAP" id="MF_00530">
    <property type="entry name" value="ATP_synth_epsil_bac"/>
    <property type="match status" value="1"/>
</dbReference>
<dbReference type="InterPro" id="IPR036794">
    <property type="entry name" value="ATP_F1_dsu/esu_C_sf"/>
</dbReference>
<dbReference type="InterPro" id="IPR001469">
    <property type="entry name" value="ATP_synth_F1_dsu/esu"/>
</dbReference>
<dbReference type="InterPro" id="IPR020546">
    <property type="entry name" value="ATP_synth_F1_dsu/esu_N"/>
</dbReference>
<dbReference type="InterPro" id="IPR020547">
    <property type="entry name" value="ATP_synth_F1_esu_C"/>
</dbReference>
<dbReference type="InterPro" id="IPR036771">
    <property type="entry name" value="ATPsynth_dsu/esu_N"/>
</dbReference>
<dbReference type="NCBIfam" id="TIGR01216">
    <property type="entry name" value="ATP_synt_epsi"/>
    <property type="match status" value="1"/>
</dbReference>
<dbReference type="NCBIfam" id="NF001846">
    <property type="entry name" value="PRK00571.1-3"/>
    <property type="match status" value="1"/>
</dbReference>
<dbReference type="NCBIfam" id="NF009980">
    <property type="entry name" value="PRK13446.1"/>
    <property type="match status" value="1"/>
</dbReference>
<dbReference type="PANTHER" id="PTHR13822">
    <property type="entry name" value="ATP SYNTHASE DELTA/EPSILON CHAIN"/>
    <property type="match status" value="1"/>
</dbReference>
<dbReference type="PANTHER" id="PTHR13822:SF10">
    <property type="entry name" value="ATP SYNTHASE EPSILON CHAIN, CHLOROPLASTIC"/>
    <property type="match status" value="1"/>
</dbReference>
<dbReference type="Pfam" id="PF00401">
    <property type="entry name" value="ATP-synt_DE"/>
    <property type="match status" value="1"/>
</dbReference>
<dbReference type="Pfam" id="PF02823">
    <property type="entry name" value="ATP-synt_DE_N"/>
    <property type="match status" value="1"/>
</dbReference>
<dbReference type="SUPFAM" id="SSF46604">
    <property type="entry name" value="Epsilon subunit of F1F0-ATP synthase C-terminal domain"/>
    <property type="match status" value="1"/>
</dbReference>
<dbReference type="SUPFAM" id="SSF51344">
    <property type="entry name" value="Epsilon subunit of F1F0-ATP synthase N-terminal domain"/>
    <property type="match status" value="1"/>
</dbReference>
<accession>A6QIU6</accession>
<keyword id="KW-0066">ATP synthesis</keyword>
<keyword id="KW-1003">Cell membrane</keyword>
<keyword id="KW-0139">CF(1)</keyword>
<keyword id="KW-0375">Hydrogen ion transport</keyword>
<keyword id="KW-0406">Ion transport</keyword>
<keyword id="KW-0472">Membrane</keyword>
<keyword id="KW-0813">Transport</keyword>
<sequence length="134" mass="14844">MNTLNLDIVTPNGSVYNRDNVELVVMQTTAGEIGVMSGHIPTVAALKTGFVKVKFHDGTEYIAVSDGFVEVRKDKVSIIVQTAETAREIDVERAKLAKARAESHLENDDDNTDIHRAERALERANNRLRVAELK</sequence>